<keyword id="KW-0134">Cell wall</keyword>
<keyword id="KW-0325">Glycoprotein</keyword>
<keyword id="KW-0336">GPI-anchor</keyword>
<keyword id="KW-0449">Lipoprotein</keyword>
<keyword id="KW-0472">Membrane</keyword>
<keyword id="KW-1185">Reference proteome</keyword>
<keyword id="KW-0964">Secreted</keyword>
<keyword id="KW-0732">Signal</keyword>
<keyword id="KW-0843">Virulence</keyword>
<comment type="function">
    <text evidence="1 7">Component of the cell wall involved in virulence which plays a role in the relationship between C.albicans and the host (By similarity). Involved in the regulation or assembly of chitin within the cell wall.</text>
</comment>
<comment type="subcellular location">
    <subcellularLocation>
        <location>Secreted</location>
        <location>Cell wall</location>
    </subcellularLocation>
    <subcellularLocation>
        <location>Membrane</location>
        <topology>Lipid-anchor</topology>
        <topology>GPI-anchor</topology>
    </subcellularLocation>
</comment>
<comment type="induction">
    <text evidence="5 6 8 9 10">Expression is regulated upon white-opaque switch, during cell wall regeneration, and when cells are grown on lactate. Also up-regulated upon milbemycin A3 oxim derivative (A3Ox) treatment. Repressed by BCR1.</text>
</comment>
<comment type="PTM">
    <text>The GPI-anchor is attached to the protein in the endoplasmic reticulum and serves to target the protein to the cell surface. There, the glucosamine-inositol phospholipid moiety is cleaved off and the GPI-modified mannoprotein is covalently attached via its lipidless GPI glycan remnant to the 1,6-beta-glucan of the outer cell wall layer.</text>
</comment>
<comment type="disruption phenotype">
    <text evidence="7">Leads to hypersensitivity to caspofungin.</text>
</comment>
<comment type="similarity">
    <text evidence="11">Belongs to the SRP1/TIP1 family.</text>
</comment>
<comment type="sequence caution" evidence="11">
    <conflict type="erroneous initiation">
        <sequence resource="EMBL-CDS" id="AOW29157"/>
    </conflict>
    <text>Extended N-terminus.</text>
</comment>
<feature type="signal peptide" evidence="2">
    <location>
        <begin position="1"/>
        <end position="18"/>
    </location>
</feature>
<feature type="chain" id="PRO_0000424729" description="Cell wall protein PGA31">
    <location>
        <begin position="19"/>
        <end position="271"/>
    </location>
</feature>
<feature type="propeptide" id="PRO_0000424730" description="Removed in mature form" evidence="2">
    <location>
        <begin position="272"/>
        <end position="293"/>
    </location>
</feature>
<feature type="region of interest" description="Disordered" evidence="4">
    <location>
        <begin position="161"/>
        <end position="187"/>
    </location>
</feature>
<feature type="region of interest" description="Disordered" evidence="4">
    <location>
        <begin position="233"/>
        <end position="262"/>
    </location>
</feature>
<feature type="compositionally biased region" description="Low complexity" evidence="4">
    <location>
        <begin position="163"/>
        <end position="180"/>
    </location>
</feature>
<feature type="lipid moiety-binding region" description="GPI-anchor amidated glycine" evidence="2">
    <location>
        <position position="271"/>
    </location>
</feature>
<feature type="glycosylation site" description="N-linked (GlcNAc...) asparagine" evidence="3">
    <location>
        <position position="131"/>
    </location>
</feature>
<feature type="glycosylation site" description="N-linked (GlcNAc...) asparagine" evidence="3">
    <location>
        <position position="190"/>
    </location>
</feature>
<name>PGA31_CANAL</name>
<protein>
    <recommendedName>
        <fullName>Cell wall protein PGA31</fullName>
    </recommendedName>
    <alternativeName>
        <fullName>GPI-anchored protein 31</fullName>
    </alternativeName>
    <alternativeName>
        <fullName>LDG family protein 5</fullName>
    </alternativeName>
</protein>
<evidence type="ECO:0000250" key="1"/>
<evidence type="ECO:0000255" key="2"/>
<evidence type="ECO:0000255" key="3">
    <source>
        <dbReference type="PROSITE-ProRule" id="PRU00498"/>
    </source>
</evidence>
<evidence type="ECO:0000256" key="4">
    <source>
        <dbReference type="SAM" id="MobiDB-lite"/>
    </source>
</evidence>
<evidence type="ECO:0000269" key="5">
    <source>
    </source>
</evidence>
<evidence type="ECO:0000269" key="6">
    <source>
    </source>
</evidence>
<evidence type="ECO:0000269" key="7">
    <source>
    </source>
</evidence>
<evidence type="ECO:0000269" key="8">
    <source>
    </source>
</evidence>
<evidence type="ECO:0000269" key="9">
    <source>
    </source>
</evidence>
<evidence type="ECO:0000269" key="10">
    <source>
    </source>
</evidence>
<evidence type="ECO:0000305" key="11"/>
<gene>
    <name type="primary">PGA31</name>
    <name type="synonym">LDG5</name>
    <name type="ordered locus">CAALFM_C404080CA</name>
    <name type="ORF">CaO19.12761</name>
    <name type="ORF">CaO19.5302</name>
</gene>
<organism>
    <name type="scientific">Candida albicans (strain SC5314 / ATCC MYA-2876)</name>
    <name type="common">Yeast</name>
    <dbReference type="NCBI Taxonomy" id="237561"/>
    <lineage>
        <taxon>Eukaryota</taxon>
        <taxon>Fungi</taxon>
        <taxon>Dikarya</taxon>
        <taxon>Ascomycota</taxon>
        <taxon>Saccharomycotina</taxon>
        <taxon>Pichiomycetes</taxon>
        <taxon>Debaryomycetaceae</taxon>
        <taxon>Candida/Lodderomyces clade</taxon>
        <taxon>Candida</taxon>
    </lineage>
</organism>
<accession>Q5A5U9</accession>
<accession>A0A1D8PM04</accession>
<accession>Q5A631</accession>
<sequence length="293" mass="29735">MKFLTAASLLTLSSSALAAIKDIQLYAQSSNNEVNDFGISSRHEGAALNYLFLAAPGVAENLKYDDETKTVYTELKAGSSTVRQPLNVGNTVLQLGGSGDGTKVDIAEDGTLSFDGSDSVGAAKNINDPYNYSKDSYAVVKGGDGAIPIKLVAKFTGDDKESASSSSSSAAPEPTASSSEAPKETPVYSNSTVTLYTTYCPLSTTITLTVCSDVCTPTVIETSGSVTVSSVQVPSKTASSEAAPPKTTVDSVSKPAPSGKKPTAAVTSFEGAANALTGGSVAIAVAAAIGLVF</sequence>
<proteinExistence type="evidence at protein level"/>
<dbReference type="EMBL" id="CP017626">
    <property type="protein sequence ID" value="AOW29157.1"/>
    <property type="status" value="ALT_INIT"/>
    <property type="molecule type" value="Genomic_DNA"/>
</dbReference>
<dbReference type="RefSeq" id="XP_717105.1">
    <property type="nucleotide sequence ID" value="XM_712012.1"/>
</dbReference>
<dbReference type="STRING" id="237561.Q5A5U9"/>
<dbReference type="GlyCosmos" id="Q5A5U9">
    <property type="glycosylation" value="2 sites, No reported glycans"/>
</dbReference>
<dbReference type="GeneID" id="3641226"/>
<dbReference type="KEGG" id="cal:CAALFM_C404080CA"/>
<dbReference type="eggNOG" id="ENOG502SXWZ">
    <property type="taxonomic scope" value="Eukaryota"/>
</dbReference>
<dbReference type="HOGENOM" id="CLU_083354_0_0_1"/>
<dbReference type="InParanoid" id="Q5A5U9"/>
<dbReference type="OrthoDB" id="4018368at2759"/>
<dbReference type="PRO" id="PR:Q5A5U9"/>
<dbReference type="Proteomes" id="UP000000559">
    <property type="component" value="Chromosome 4"/>
</dbReference>
<dbReference type="GO" id="GO:0005576">
    <property type="term" value="C:extracellular region"/>
    <property type="evidence" value="ECO:0007669"/>
    <property type="project" value="UniProtKB-KW"/>
</dbReference>
<dbReference type="GO" id="GO:0098552">
    <property type="term" value="C:side of membrane"/>
    <property type="evidence" value="ECO:0007669"/>
    <property type="project" value="UniProtKB-KW"/>
</dbReference>
<reference key="1">
    <citation type="journal article" date="2004" name="Proc. Natl. Acad. Sci. U.S.A.">
        <title>The diploid genome sequence of Candida albicans.</title>
        <authorList>
            <person name="Jones T."/>
            <person name="Federspiel N.A."/>
            <person name="Chibana H."/>
            <person name="Dungan J."/>
            <person name="Kalman S."/>
            <person name="Magee B.B."/>
            <person name="Newport G."/>
            <person name="Thorstenson Y.R."/>
            <person name="Agabian N."/>
            <person name="Magee P.T."/>
            <person name="Davis R.W."/>
            <person name="Scherer S."/>
        </authorList>
    </citation>
    <scope>NUCLEOTIDE SEQUENCE [LARGE SCALE GENOMIC DNA]</scope>
    <source>
        <strain>SC5314 / ATCC MYA-2876</strain>
    </source>
</reference>
<reference key="2">
    <citation type="journal article" date="2007" name="Genome Biol.">
        <title>Assembly of the Candida albicans genome into sixteen supercontigs aligned on the eight chromosomes.</title>
        <authorList>
            <person name="van het Hoog M."/>
            <person name="Rast T.J."/>
            <person name="Martchenko M."/>
            <person name="Grindle S."/>
            <person name="Dignard D."/>
            <person name="Hogues H."/>
            <person name="Cuomo C."/>
            <person name="Berriman M."/>
            <person name="Scherer S."/>
            <person name="Magee B.B."/>
            <person name="Whiteway M."/>
            <person name="Chibana H."/>
            <person name="Nantel A."/>
            <person name="Magee P.T."/>
        </authorList>
    </citation>
    <scope>GENOME REANNOTATION</scope>
    <source>
        <strain>SC5314 / ATCC MYA-2876</strain>
    </source>
</reference>
<reference key="3">
    <citation type="journal article" date="2013" name="Genome Biol.">
        <title>Assembly of a phased diploid Candida albicans genome facilitates allele-specific measurements and provides a simple model for repeat and indel structure.</title>
        <authorList>
            <person name="Muzzey D."/>
            <person name="Schwartz K."/>
            <person name="Weissman J.S."/>
            <person name="Sherlock G."/>
        </authorList>
    </citation>
    <scope>NUCLEOTIDE SEQUENCE [LARGE SCALE GENOMIC DNA]</scope>
    <scope>GENOME REANNOTATION</scope>
    <source>
        <strain>SC5314 / ATCC MYA-2876</strain>
    </source>
</reference>
<reference key="4">
    <citation type="journal article" date="2002" name="Proc. Natl. Acad. Sci. U.S.A.">
        <title>Metabolic specialization associated with phenotypic switching in Candidaalbicans.</title>
        <authorList>
            <person name="Lan C.Y."/>
            <person name="Newport G."/>
            <person name="Murillo L.A."/>
            <person name="Jones T."/>
            <person name="Scherer S."/>
            <person name="Davis R.W."/>
            <person name="Agabian N."/>
        </authorList>
    </citation>
    <scope>INDUCTION</scope>
</reference>
<reference key="5">
    <citation type="journal article" date="2003" name="Yeast">
        <title>Genome-wide identification of fungal GPI proteins.</title>
        <authorList>
            <person name="De Groot P.W."/>
            <person name="Hellingwerf K.J."/>
            <person name="Klis F.M."/>
        </authorList>
    </citation>
    <scope>PREDICTION OF GPI-ANCHOR</scope>
</reference>
<reference key="6">
    <citation type="journal article" date="2006" name="Fungal Genet. Biol.">
        <title>Genomic response programs of Candida albicans following protoplasting and regeneration.</title>
        <authorList>
            <person name="Castillo L."/>
            <person name="Martinez A.I."/>
            <person name="Garcera A."/>
            <person name="Garcia-Martinez J."/>
            <person name="Ruiz-Herrera J."/>
            <person name="Valentin E."/>
            <person name="Sentandreu R."/>
        </authorList>
    </citation>
    <scope>INDUCTION</scope>
</reference>
<reference key="7">
    <citation type="journal article" date="2008" name="Fungal Genet. Biol.">
        <title>Functional analysis of Candida albicans GPI-anchored proteins: roles in cell wall integrity and caspofungin sensitivity.</title>
        <authorList>
            <person name="Plaine A."/>
            <person name="Walker L."/>
            <person name="Da Costa G."/>
            <person name="Mora-Montes H.M."/>
            <person name="McKinnon A."/>
            <person name="Gow N.A."/>
            <person name="Gaillardin C."/>
            <person name="Munro C.A."/>
            <person name="Richard M.L."/>
        </authorList>
    </citation>
    <scope>FUNCTION</scope>
    <scope>DISRUPTION PHENOTYPE</scope>
</reference>
<reference key="8">
    <citation type="journal article" date="2008" name="Proteomics">
        <title>A study of the Candida albicans cell wall proteome.</title>
        <authorList>
            <person name="Castillo L."/>
            <person name="Calvo E."/>
            <person name="Martinez A.I."/>
            <person name="Ruiz-Herrera J."/>
            <person name="Valentin E."/>
            <person name="Lopez J.A."/>
            <person name="Sentandreu R."/>
        </authorList>
    </citation>
    <scope>IDENTIFICATION BY MASS SPECTROMETRY</scope>
    <scope>SUBCELLULAR LOCATION</scope>
</reference>
<reference key="9">
    <citation type="journal article" date="2012" name="Proteomics">
        <title>Carbon source-induced reprogramming of the cell wall proteome and secretome modulates the adherence and drug resistance of the fungal pathogen Candida albicans.</title>
        <authorList>
            <person name="Ene I.V."/>
            <person name="Heilmann C.J."/>
            <person name="Sorgo A.G."/>
            <person name="Walker L.A."/>
            <person name="de Koster C.G."/>
            <person name="Munro C.A."/>
            <person name="Klis F.M."/>
            <person name="Brown A.J."/>
        </authorList>
    </citation>
    <scope>IDENTIFICATION BY MASS SPECTROMETRY</scope>
    <scope>SUBCELLULAR LOCATION</scope>
    <scope>INDUCTION</scope>
</reference>
<reference key="10">
    <citation type="journal article" date="2013" name="Antimicrob. Agents Chemother.">
        <title>Milbemycins: more than efflux inhibitors for fungal pathogens.</title>
        <authorList>
            <person name="Silva L.V."/>
            <person name="Sanguinetti M."/>
            <person name="Vandeputte P."/>
            <person name="Torelli R."/>
            <person name="Rochat B."/>
            <person name="Sanglard D."/>
        </authorList>
    </citation>
    <scope>INDUCTION</scope>
</reference>
<reference key="11">
    <citation type="journal article" date="2013" name="Eukaryot. Cell">
        <title>Identification of genes upregulated by the transcription factor Bcr1 that are involved in impermeability, impenetrability, and drug resistance of Candida albicans a/alpha biofilms.</title>
        <authorList>
            <person name="Srikantha T."/>
            <person name="Daniels K.J."/>
            <person name="Pujol C."/>
            <person name="Kim E."/>
            <person name="Soll D.R."/>
        </authorList>
    </citation>
    <scope>INDUCTION</scope>
</reference>